<organism>
    <name type="scientific">Bifidobacterium longum (strain NCC 2705)</name>
    <dbReference type="NCBI Taxonomy" id="206672"/>
    <lineage>
        <taxon>Bacteria</taxon>
        <taxon>Bacillati</taxon>
        <taxon>Actinomycetota</taxon>
        <taxon>Actinomycetes</taxon>
        <taxon>Bifidobacteriales</taxon>
        <taxon>Bifidobacteriaceae</taxon>
        <taxon>Bifidobacterium</taxon>
    </lineage>
</organism>
<feature type="chain" id="PRO_0000147851" description="Phosphoglucosamine mutase">
    <location>
        <begin position="1"/>
        <end position="461"/>
    </location>
</feature>
<feature type="active site" description="Phosphoserine intermediate" evidence="1">
    <location>
        <position position="107"/>
    </location>
</feature>
<feature type="binding site" description="via phosphate group" evidence="1">
    <location>
        <position position="107"/>
    </location>
    <ligand>
        <name>Mg(2+)</name>
        <dbReference type="ChEBI" id="CHEBI:18420"/>
    </ligand>
</feature>
<feature type="binding site" evidence="1">
    <location>
        <position position="254"/>
    </location>
    <ligand>
        <name>Mg(2+)</name>
        <dbReference type="ChEBI" id="CHEBI:18420"/>
    </ligand>
</feature>
<feature type="binding site" evidence="1">
    <location>
        <position position="256"/>
    </location>
    <ligand>
        <name>Mg(2+)</name>
        <dbReference type="ChEBI" id="CHEBI:18420"/>
    </ligand>
</feature>
<feature type="binding site" evidence="1">
    <location>
        <position position="258"/>
    </location>
    <ligand>
        <name>Mg(2+)</name>
        <dbReference type="ChEBI" id="CHEBI:18420"/>
    </ligand>
</feature>
<feature type="modified residue" description="Phosphoserine" evidence="1">
    <location>
        <position position="107"/>
    </location>
</feature>
<comment type="function">
    <text evidence="1">Catalyzes the conversion of glucosamine-6-phosphate to glucosamine-1-phosphate.</text>
</comment>
<comment type="catalytic activity">
    <reaction evidence="1">
        <text>alpha-D-glucosamine 1-phosphate = D-glucosamine 6-phosphate</text>
        <dbReference type="Rhea" id="RHEA:23424"/>
        <dbReference type="ChEBI" id="CHEBI:58516"/>
        <dbReference type="ChEBI" id="CHEBI:58725"/>
        <dbReference type="EC" id="5.4.2.10"/>
    </reaction>
</comment>
<comment type="cofactor">
    <cofactor evidence="1">
        <name>Mg(2+)</name>
        <dbReference type="ChEBI" id="CHEBI:18420"/>
    </cofactor>
    <text evidence="1">Binds 1 Mg(2+) ion per subunit.</text>
</comment>
<comment type="PTM">
    <text evidence="1">Activated by phosphorylation.</text>
</comment>
<comment type="similarity">
    <text evidence="1">Belongs to the phosphohexose mutase family.</text>
</comment>
<keyword id="KW-0413">Isomerase</keyword>
<keyword id="KW-0460">Magnesium</keyword>
<keyword id="KW-0479">Metal-binding</keyword>
<keyword id="KW-0597">Phosphoprotein</keyword>
<keyword id="KW-1185">Reference proteome</keyword>
<gene>
    <name evidence="1" type="primary">glmM</name>
    <name type="ordered locus">BL1187</name>
</gene>
<proteinExistence type="inferred from homology"/>
<accession>Q8G533</accession>
<dbReference type="EC" id="5.4.2.10" evidence="1"/>
<dbReference type="EMBL" id="AE014295">
    <property type="protein sequence ID" value="AAN24992.1"/>
    <property type="molecule type" value="Genomic_DNA"/>
</dbReference>
<dbReference type="RefSeq" id="NP_696356.1">
    <property type="nucleotide sequence ID" value="NC_004307.2"/>
</dbReference>
<dbReference type="RefSeq" id="WP_007051299.1">
    <property type="nucleotide sequence ID" value="NC_004307.2"/>
</dbReference>
<dbReference type="SMR" id="Q8G533"/>
<dbReference type="STRING" id="206672.BL1187"/>
<dbReference type="EnsemblBacteria" id="AAN24992">
    <property type="protein sequence ID" value="AAN24992"/>
    <property type="gene ID" value="BL1187"/>
</dbReference>
<dbReference type="GeneID" id="69577665"/>
<dbReference type="KEGG" id="blo:BL1187"/>
<dbReference type="PATRIC" id="fig|206672.9.peg.900"/>
<dbReference type="HOGENOM" id="CLU_016950_7_0_11"/>
<dbReference type="OrthoDB" id="9803322at2"/>
<dbReference type="PhylomeDB" id="Q8G533"/>
<dbReference type="Proteomes" id="UP000000439">
    <property type="component" value="Chromosome"/>
</dbReference>
<dbReference type="GO" id="GO:0005829">
    <property type="term" value="C:cytosol"/>
    <property type="evidence" value="ECO:0007669"/>
    <property type="project" value="TreeGrafter"/>
</dbReference>
<dbReference type="GO" id="GO:0000287">
    <property type="term" value="F:magnesium ion binding"/>
    <property type="evidence" value="ECO:0007669"/>
    <property type="project" value="UniProtKB-UniRule"/>
</dbReference>
<dbReference type="GO" id="GO:0008966">
    <property type="term" value="F:phosphoglucosamine mutase activity"/>
    <property type="evidence" value="ECO:0007669"/>
    <property type="project" value="UniProtKB-UniRule"/>
</dbReference>
<dbReference type="GO" id="GO:0004615">
    <property type="term" value="F:phosphomannomutase activity"/>
    <property type="evidence" value="ECO:0007669"/>
    <property type="project" value="TreeGrafter"/>
</dbReference>
<dbReference type="GO" id="GO:0005975">
    <property type="term" value="P:carbohydrate metabolic process"/>
    <property type="evidence" value="ECO:0007669"/>
    <property type="project" value="InterPro"/>
</dbReference>
<dbReference type="GO" id="GO:0009252">
    <property type="term" value="P:peptidoglycan biosynthetic process"/>
    <property type="evidence" value="ECO:0007669"/>
    <property type="project" value="TreeGrafter"/>
</dbReference>
<dbReference type="GO" id="GO:0006048">
    <property type="term" value="P:UDP-N-acetylglucosamine biosynthetic process"/>
    <property type="evidence" value="ECO:0007669"/>
    <property type="project" value="TreeGrafter"/>
</dbReference>
<dbReference type="CDD" id="cd05802">
    <property type="entry name" value="GlmM"/>
    <property type="match status" value="1"/>
</dbReference>
<dbReference type="FunFam" id="3.30.310.50:FF:000001">
    <property type="entry name" value="Phosphoglucosamine mutase"/>
    <property type="match status" value="1"/>
</dbReference>
<dbReference type="FunFam" id="3.40.120.10:FF:000001">
    <property type="entry name" value="Phosphoglucosamine mutase"/>
    <property type="match status" value="1"/>
</dbReference>
<dbReference type="FunFam" id="3.40.120.10:FF:000002">
    <property type="entry name" value="Phosphoglucosamine mutase"/>
    <property type="match status" value="1"/>
</dbReference>
<dbReference type="Gene3D" id="3.40.120.10">
    <property type="entry name" value="Alpha-D-Glucose-1,6-Bisphosphate, subunit A, domain 3"/>
    <property type="match status" value="3"/>
</dbReference>
<dbReference type="Gene3D" id="3.30.310.50">
    <property type="entry name" value="Alpha-D-phosphohexomutase, C-terminal domain"/>
    <property type="match status" value="1"/>
</dbReference>
<dbReference type="HAMAP" id="MF_01554_B">
    <property type="entry name" value="GlmM_B"/>
    <property type="match status" value="1"/>
</dbReference>
<dbReference type="InterPro" id="IPR005844">
    <property type="entry name" value="A-D-PHexomutase_a/b/a-I"/>
</dbReference>
<dbReference type="InterPro" id="IPR016055">
    <property type="entry name" value="A-D-PHexomutase_a/b/a-I/II/III"/>
</dbReference>
<dbReference type="InterPro" id="IPR005845">
    <property type="entry name" value="A-D-PHexomutase_a/b/a-II"/>
</dbReference>
<dbReference type="InterPro" id="IPR005846">
    <property type="entry name" value="A-D-PHexomutase_a/b/a-III"/>
</dbReference>
<dbReference type="InterPro" id="IPR005843">
    <property type="entry name" value="A-D-PHexomutase_C"/>
</dbReference>
<dbReference type="InterPro" id="IPR036900">
    <property type="entry name" value="A-D-PHexomutase_C_sf"/>
</dbReference>
<dbReference type="InterPro" id="IPR005841">
    <property type="entry name" value="Alpha-D-phosphohexomutase_SF"/>
</dbReference>
<dbReference type="InterPro" id="IPR006352">
    <property type="entry name" value="GlmM_bact"/>
</dbReference>
<dbReference type="InterPro" id="IPR050060">
    <property type="entry name" value="Phosphoglucosamine_mutase"/>
</dbReference>
<dbReference type="NCBIfam" id="TIGR01455">
    <property type="entry name" value="glmM"/>
    <property type="match status" value="1"/>
</dbReference>
<dbReference type="PANTHER" id="PTHR42946:SF1">
    <property type="entry name" value="PHOSPHOGLUCOMUTASE (ALPHA-D-GLUCOSE-1,6-BISPHOSPHATE-DEPENDENT)"/>
    <property type="match status" value="1"/>
</dbReference>
<dbReference type="PANTHER" id="PTHR42946">
    <property type="entry name" value="PHOSPHOHEXOSE MUTASE"/>
    <property type="match status" value="1"/>
</dbReference>
<dbReference type="Pfam" id="PF02878">
    <property type="entry name" value="PGM_PMM_I"/>
    <property type="match status" value="1"/>
</dbReference>
<dbReference type="Pfam" id="PF02879">
    <property type="entry name" value="PGM_PMM_II"/>
    <property type="match status" value="1"/>
</dbReference>
<dbReference type="Pfam" id="PF02880">
    <property type="entry name" value="PGM_PMM_III"/>
    <property type="match status" value="1"/>
</dbReference>
<dbReference type="Pfam" id="PF00408">
    <property type="entry name" value="PGM_PMM_IV"/>
    <property type="match status" value="1"/>
</dbReference>
<dbReference type="PRINTS" id="PR00509">
    <property type="entry name" value="PGMPMM"/>
</dbReference>
<dbReference type="SUPFAM" id="SSF55957">
    <property type="entry name" value="Phosphoglucomutase, C-terminal domain"/>
    <property type="match status" value="1"/>
</dbReference>
<dbReference type="SUPFAM" id="SSF53738">
    <property type="entry name" value="Phosphoglucomutase, first 3 domains"/>
    <property type="match status" value="3"/>
</dbReference>
<evidence type="ECO:0000255" key="1">
    <source>
        <dbReference type="HAMAP-Rule" id="MF_01554"/>
    </source>
</evidence>
<protein>
    <recommendedName>
        <fullName evidence="1">Phosphoglucosamine mutase</fullName>
        <ecNumber evidence="1">5.4.2.10</ecNumber>
    </recommendedName>
</protein>
<reference key="1">
    <citation type="journal article" date="2002" name="Proc. Natl. Acad. Sci. U.S.A.">
        <title>The genome sequence of Bifidobacterium longum reflects its adaptation to the human gastrointestinal tract.</title>
        <authorList>
            <person name="Schell M.A."/>
            <person name="Karmirantzou M."/>
            <person name="Snel B."/>
            <person name="Vilanova D."/>
            <person name="Berger B."/>
            <person name="Pessi G."/>
            <person name="Zwahlen M.-C."/>
            <person name="Desiere F."/>
            <person name="Bork P."/>
            <person name="Delley M."/>
            <person name="Pridmore R.D."/>
            <person name="Arigoni F."/>
        </authorList>
    </citation>
    <scope>NUCLEOTIDE SEQUENCE [LARGE SCALE GENOMIC DNA]</scope>
    <source>
        <strain>NCC 2705</strain>
    </source>
</reference>
<sequence length="461" mass="48660">MPKMFGTDGVRGLANRDLTARLALDLGDAAVRVLGDAGTQDDQPEGRRRALVGRDTRVSGDFLASALSAGMAAGGFDVIDAGIIPTPGIAFLTSVLNVEMGAVISASHNPMPDNGIKFFARGGFKLPDQKEDDIEAVLGQDWDRPTGAGVGRVSHDQTTATNLYIDHLVATIAPLNDDKTQPKPLKGLKIVADCANGATSVVAPEALRRAGADVIVINASPDGYNINKNAGSTHPEQLQAMVKATDAVMGVAFDGDADRCLAVDEDGNMINGDQIMGILARAKQREGKLNHDTLVVTVMSNLGLKLALKDMGIKTVETAVGDRYVLEEMLKGDYSLGGEQSGHVINREFATTGDGTLTALTLCNEVVKSGKSLKELAADFPQLPQTLINVPNVDKKAASTNKRIQDAVAREEELLGDTGRVLLRPSGTEPLVRVMAEAATQAYADEVCTRLAKIVAEELAL</sequence>
<name>GLMM_BIFLO</name>